<proteinExistence type="evidence at transcript level"/>
<protein>
    <recommendedName>
        <fullName>POU domain, class 3, transcription factor 4</fullName>
    </recommendedName>
    <alternativeName>
        <fullName>Brain-specific homeobox/POU domain protein 4</fullName>
        <shortName>Brain-4</shortName>
        <shortName>Brn-4</shortName>
    </alternativeName>
    <alternativeName>
        <fullName>Octamer-binding protein 9</fullName>
        <shortName>Oct-9</shortName>
    </alternativeName>
    <alternativeName>
        <fullName>Octamer-binding transcription factor 9</fullName>
        <shortName>OTF-9</shortName>
    </alternativeName>
    <alternativeName>
        <fullName>RHS2 class III POU protein</fullName>
    </alternativeName>
</protein>
<comment type="function">
    <text>Probable transcription factor which exert its primary action widely during early neural development and in a very limited set of neurons in the mature brain.</text>
</comment>
<comment type="subunit">
    <text evidence="2">Interacts with HNRNPU.</text>
</comment>
<comment type="subcellular location">
    <subcellularLocation>
        <location>Nucleus</location>
    </subcellularLocation>
</comment>
<comment type="tissue specificity">
    <text>Brain specific.</text>
</comment>
<comment type="similarity">
    <text evidence="6">Belongs to the POU transcription factor family. Class-3 subfamily.</text>
</comment>
<reference key="1">
    <citation type="journal article" date="1992" name="EMBO J.">
        <title>Brain 4: a novel mammalian POU domain transcription factor exhibiting restricted brain-specific expression.</title>
        <authorList>
            <person name="Mathis J.M."/>
            <person name="Simmons D.M."/>
            <person name="He X."/>
            <person name="Swanson L.W."/>
            <person name="Rosenfeld M.G."/>
        </authorList>
    </citation>
    <scope>NUCLEOTIDE SEQUENCE [MRNA]</scope>
    <source>
        <strain>Sprague-Dawley</strain>
    </source>
</reference>
<reference key="2">
    <citation type="journal article" date="1992" name="Proc. Natl. Acad. Sci. U.S.A.">
        <title>RHS2, a POU domain-containing gene, and its expression in developing and adult rat.</title>
        <authorList>
            <person name="le Moine C."/>
            <person name="Young W.S."/>
        </authorList>
    </citation>
    <scope>NUCLEOTIDE SEQUENCE [MRNA]</scope>
</reference>
<evidence type="ECO:0000250" key="1">
    <source>
        <dbReference type="UniProtKB" id="P20265"/>
    </source>
</evidence>
<evidence type="ECO:0000250" key="2">
    <source>
        <dbReference type="UniProtKB" id="P49335"/>
    </source>
</evidence>
<evidence type="ECO:0000255" key="3">
    <source>
        <dbReference type="PROSITE-ProRule" id="PRU00108"/>
    </source>
</evidence>
<evidence type="ECO:0000255" key="4">
    <source>
        <dbReference type="PROSITE-ProRule" id="PRU00530"/>
    </source>
</evidence>
<evidence type="ECO:0000256" key="5">
    <source>
        <dbReference type="SAM" id="MobiDB-lite"/>
    </source>
</evidence>
<evidence type="ECO:0000305" key="6"/>
<organism>
    <name type="scientific">Rattus norvegicus</name>
    <name type="common">Rat</name>
    <dbReference type="NCBI Taxonomy" id="10116"/>
    <lineage>
        <taxon>Eukaryota</taxon>
        <taxon>Metazoa</taxon>
        <taxon>Chordata</taxon>
        <taxon>Craniata</taxon>
        <taxon>Vertebrata</taxon>
        <taxon>Euteleostomi</taxon>
        <taxon>Mammalia</taxon>
        <taxon>Eutheria</taxon>
        <taxon>Euarchontoglires</taxon>
        <taxon>Glires</taxon>
        <taxon>Rodentia</taxon>
        <taxon>Myomorpha</taxon>
        <taxon>Muroidea</taxon>
        <taxon>Muridae</taxon>
        <taxon>Murinae</taxon>
        <taxon>Rattus</taxon>
    </lineage>
</organism>
<feature type="chain" id="PRO_0000100735" description="POU domain, class 3, transcription factor 4">
    <location>
        <begin position="1"/>
        <end position="361"/>
    </location>
</feature>
<feature type="domain" description="POU-specific" evidence="4">
    <location>
        <begin position="186"/>
        <end position="260"/>
    </location>
</feature>
<feature type="DNA-binding region" description="Homeobox" evidence="3">
    <location>
        <begin position="278"/>
        <end position="337"/>
    </location>
</feature>
<feature type="region of interest" description="Disordered" evidence="5">
    <location>
        <begin position="99"/>
        <end position="131"/>
    </location>
</feature>
<feature type="region of interest" description="Disordered" evidence="5">
    <location>
        <begin position="144"/>
        <end position="192"/>
    </location>
</feature>
<feature type="region of interest" description="Disordered" evidence="5">
    <location>
        <begin position="334"/>
        <end position="361"/>
    </location>
</feature>
<feature type="compositionally biased region" description="Polar residues" evidence="5">
    <location>
        <begin position="119"/>
        <end position="131"/>
    </location>
</feature>
<feature type="compositionally biased region" description="Basic and acidic residues" evidence="5">
    <location>
        <begin position="165"/>
        <end position="183"/>
    </location>
</feature>
<feature type="compositionally biased region" description="Basic and acidic residues" evidence="5">
    <location>
        <begin position="343"/>
        <end position="361"/>
    </location>
</feature>
<feature type="modified residue" description="Phosphoserine" evidence="1">
    <location>
        <position position="265"/>
    </location>
</feature>
<name>PO3F4_RAT</name>
<dbReference type="EMBL" id="Z11834">
    <property type="protein sequence ID" value="CAA77855.1"/>
    <property type="molecule type" value="mRNA"/>
</dbReference>
<dbReference type="EMBL" id="M84645">
    <property type="protein sequence ID" value="AAA42042.1"/>
    <property type="molecule type" value="mRNA"/>
</dbReference>
<dbReference type="PIR" id="A44144">
    <property type="entry name" value="A44144"/>
</dbReference>
<dbReference type="RefSeq" id="NP_058948.1">
    <property type="nucleotide sequence ID" value="NM_017252.2"/>
</dbReference>
<dbReference type="SMR" id="P62516"/>
<dbReference type="BioGRID" id="248222">
    <property type="interactions" value="5"/>
</dbReference>
<dbReference type="FunCoup" id="P62516">
    <property type="interactions" value="22"/>
</dbReference>
<dbReference type="STRING" id="10116.ENSRNOP00000003724"/>
<dbReference type="iPTMnet" id="P62516"/>
<dbReference type="PhosphoSitePlus" id="P62516"/>
<dbReference type="PaxDb" id="10116-ENSRNOP00000003724"/>
<dbReference type="Ensembl" id="ENSRNOT00000003724.7">
    <property type="protein sequence ID" value="ENSRNOP00000003724.4"/>
    <property type="gene ID" value="ENSRNOG00000002784.7"/>
</dbReference>
<dbReference type="GeneID" id="29589"/>
<dbReference type="KEGG" id="rno:29589"/>
<dbReference type="UCSC" id="RGD:61947">
    <property type="organism name" value="rat"/>
</dbReference>
<dbReference type="AGR" id="RGD:61947"/>
<dbReference type="CTD" id="5456"/>
<dbReference type="RGD" id="61947">
    <property type="gene designation" value="Pou3f4"/>
</dbReference>
<dbReference type="eggNOG" id="KOG3802">
    <property type="taxonomic scope" value="Eukaryota"/>
</dbReference>
<dbReference type="GeneTree" id="ENSGT00940000161429"/>
<dbReference type="HOGENOM" id="CLU_013065_1_2_1"/>
<dbReference type="InParanoid" id="P62516"/>
<dbReference type="OMA" id="QHEVYSH"/>
<dbReference type="OrthoDB" id="6358449at2759"/>
<dbReference type="PhylomeDB" id="P62516"/>
<dbReference type="TreeFam" id="TF316413"/>
<dbReference type="PRO" id="PR:P62516"/>
<dbReference type="Proteomes" id="UP000002494">
    <property type="component" value="Chromosome X"/>
</dbReference>
<dbReference type="Bgee" id="ENSRNOG00000002784">
    <property type="expression patterns" value="Expressed in frontal cortex and 1 other cell type or tissue"/>
</dbReference>
<dbReference type="GO" id="GO:0005634">
    <property type="term" value="C:nucleus"/>
    <property type="evidence" value="ECO:0007669"/>
    <property type="project" value="UniProtKB-SubCell"/>
</dbReference>
<dbReference type="GO" id="GO:0003700">
    <property type="term" value="F:DNA-binding transcription factor activity"/>
    <property type="evidence" value="ECO:0000314"/>
    <property type="project" value="RGD"/>
</dbReference>
<dbReference type="GO" id="GO:0000981">
    <property type="term" value="F:DNA-binding transcription factor activity, RNA polymerase II-specific"/>
    <property type="evidence" value="ECO:0000318"/>
    <property type="project" value="GO_Central"/>
</dbReference>
<dbReference type="GO" id="GO:0003690">
    <property type="term" value="F:double-stranded DNA binding"/>
    <property type="evidence" value="ECO:0000314"/>
    <property type="project" value="RGD"/>
</dbReference>
<dbReference type="GO" id="GO:0003680">
    <property type="term" value="F:minor groove of adenine-thymine-rich DNA binding"/>
    <property type="evidence" value="ECO:0000314"/>
    <property type="project" value="RGD"/>
</dbReference>
<dbReference type="GO" id="GO:0000978">
    <property type="term" value="F:RNA polymerase II cis-regulatory region sequence-specific DNA binding"/>
    <property type="evidence" value="ECO:0000318"/>
    <property type="project" value="GO_Central"/>
</dbReference>
<dbReference type="GO" id="GO:0000977">
    <property type="term" value="F:RNA polymerase II transcription regulatory region sequence-specific DNA binding"/>
    <property type="evidence" value="ECO:0000266"/>
    <property type="project" value="RGD"/>
</dbReference>
<dbReference type="GO" id="GO:0043565">
    <property type="term" value="F:sequence-specific DNA binding"/>
    <property type="evidence" value="ECO:0000266"/>
    <property type="project" value="RGD"/>
</dbReference>
<dbReference type="GO" id="GO:1990837">
    <property type="term" value="F:sequence-specific double-stranded DNA binding"/>
    <property type="evidence" value="ECO:0000266"/>
    <property type="project" value="RGD"/>
</dbReference>
<dbReference type="GO" id="GO:0090103">
    <property type="term" value="P:cochlea morphogenesis"/>
    <property type="evidence" value="ECO:0000250"/>
    <property type="project" value="UniProtKB"/>
</dbReference>
<dbReference type="GO" id="GO:0021879">
    <property type="term" value="P:forebrain neuron differentiation"/>
    <property type="evidence" value="ECO:0000266"/>
    <property type="project" value="RGD"/>
</dbReference>
<dbReference type="GO" id="GO:0048839">
    <property type="term" value="P:inner ear development"/>
    <property type="evidence" value="ECO:0000266"/>
    <property type="project" value="RGD"/>
</dbReference>
<dbReference type="GO" id="GO:2001054">
    <property type="term" value="P:negative regulation of mesenchymal cell apoptotic process"/>
    <property type="evidence" value="ECO:0000250"/>
    <property type="project" value="UniProtKB"/>
</dbReference>
<dbReference type="GO" id="GO:0006357">
    <property type="term" value="P:regulation of transcription by RNA polymerase II"/>
    <property type="evidence" value="ECO:0000318"/>
    <property type="project" value="GO_Central"/>
</dbReference>
<dbReference type="GO" id="GO:0007605">
    <property type="term" value="P:sensory perception of sound"/>
    <property type="evidence" value="ECO:0000266"/>
    <property type="project" value="RGD"/>
</dbReference>
<dbReference type="GO" id="GO:0006366">
    <property type="term" value="P:transcription by RNA polymerase II"/>
    <property type="evidence" value="ECO:0000314"/>
    <property type="project" value="RGD"/>
</dbReference>
<dbReference type="CDD" id="cd00086">
    <property type="entry name" value="homeodomain"/>
    <property type="match status" value="1"/>
</dbReference>
<dbReference type="FunFam" id="1.10.10.60:FF:000005">
    <property type="entry name" value="POU domain protein"/>
    <property type="match status" value="1"/>
</dbReference>
<dbReference type="FunFam" id="1.10.260.40:FF:000001">
    <property type="entry name" value="POU domain protein"/>
    <property type="match status" value="1"/>
</dbReference>
<dbReference type="Gene3D" id="1.10.10.60">
    <property type="entry name" value="Homeodomain-like"/>
    <property type="match status" value="1"/>
</dbReference>
<dbReference type="Gene3D" id="1.10.260.40">
    <property type="entry name" value="lambda repressor-like DNA-binding domains"/>
    <property type="match status" value="1"/>
</dbReference>
<dbReference type="InterPro" id="IPR001356">
    <property type="entry name" value="HD"/>
</dbReference>
<dbReference type="InterPro" id="IPR017970">
    <property type="entry name" value="Homeobox_CS"/>
</dbReference>
<dbReference type="InterPro" id="IPR009057">
    <property type="entry name" value="Homeodomain-like_sf"/>
</dbReference>
<dbReference type="InterPro" id="IPR010982">
    <property type="entry name" value="Lambda_DNA-bd_dom_sf"/>
</dbReference>
<dbReference type="InterPro" id="IPR013847">
    <property type="entry name" value="POU"/>
</dbReference>
<dbReference type="InterPro" id="IPR000327">
    <property type="entry name" value="POU_dom"/>
</dbReference>
<dbReference type="InterPro" id="IPR050255">
    <property type="entry name" value="POU_domain_TF"/>
</dbReference>
<dbReference type="InterPro" id="IPR016362">
    <property type="entry name" value="TF_POU_3"/>
</dbReference>
<dbReference type="PANTHER" id="PTHR11636">
    <property type="entry name" value="POU DOMAIN"/>
    <property type="match status" value="1"/>
</dbReference>
<dbReference type="PANTHER" id="PTHR11636:SF83">
    <property type="entry name" value="POU DOMAIN, CLASS 3, TRANSCRIPTION FACTOR 4"/>
    <property type="match status" value="1"/>
</dbReference>
<dbReference type="Pfam" id="PF00046">
    <property type="entry name" value="Homeodomain"/>
    <property type="match status" value="1"/>
</dbReference>
<dbReference type="Pfam" id="PF00157">
    <property type="entry name" value="Pou"/>
    <property type="match status" value="1"/>
</dbReference>
<dbReference type="PIRSF" id="PIRSF002629">
    <property type="entry name" value="Transcription_factor_POU"/>
    <property type="match status" value="1"/>
</dbReference>
<dbReference type="PRINTS" id="PR00028">
    <property type="entry name" value="POUDOMAIN"/>
</dbReference>
<dbReference type="SMART" id="SM00389">
    <property type="entry name" value="HOX"/>
    <property type="match status" value="1"/>
</dbReference>
<dbReference type="SMART" id="SM00352">
    <property type="entry name" value="POU"/>
    <property type="match status" value="1"/>
</dbReference>
<dbReference type="SUPFAM" id="SSF46689">
    <property type="entry name" value="Homeodomain-like"/>
    <property type="match status" value="1"/>
</dbReference>
<dbReference type="SUPFAM" id="SSF47413">
    <property type="entry name" value="lambda repressor-like DNA-binding domains"/>
    <property type="match status" value="1"/>
</dbReference>
<dbReference type="PROSITE" id="PS00027">
    <property type="entry name" value="HOMEOBOX_1"/>
    <property type="match status" value="1"/>
</dbReference>
<dbReference type="PROSITE" id="PS50071">
    <property type="entry name" value="HOMEOBOX_2"/>
    <property type="match status" value="1"/>
</dbReference>
<dbReference type="PROSITE" id="PS00035">
    <property type="entry name" value="POU_1"/>
    <property type="match status" value="1"/>
</dbReference>
<dbReference type="PROSITE" id="PS00465">
    <property type="entry name" value="POU_2"/>
    <property type="match status" value="1"/>
</dbReference>
<dbReference type="PROSITE" id="PS51179">
    <property type="entry name" value="POU_3"/>
    <property type="match status" value="1"/>
</dbReference>
<keyword id="KW-0238">DNA-binding</keyword>
<keyword id="KW-0371">Homeobox</keyword>
<keyword id="KW-0539">Nucleus</keyword>
<keyword id="KW-0597">Phosphoprotein</keyword>
<keyword id="KW-1185">Reference proteome</keyword>
<keyword id="KW-0804">Transcription</keyword>
<keyword id="KW-0805">Transcription regulation</keyword>
<accession>P62516</accession>
<accession>P25216</accession>
<sequence>MATAASNPYSILSSSSLVHADSAGMQQGSPFRNPQKLLQSDYLQGVPSNGHPLGHHWVTSLSDGGPWSSTLATSPLDQQDVKPGREDLQLGAIIHHRSPHVAHHSPHTNHPNAWGASPAPNSSITSSGQPLNVYSQPGFTVSGMLEHGGLTPPPAAASTQSLHPVLREPPDHGELGSHHCQDHSDEETPTSDELEQFAKQFKQRRIKLGFTQADVGLALGTLYGNVFSQTTICRFEALQLSFKNMCKLKPLLNKWLEEADSSTGSPTSIDKIAAQGRKRKKRTSIEVSVKGVLETHFLKCPKPAAQEISSLADSLQLEKEVVRVWFCNRRQKEKRMTPPGDQQPHEVYSHTVKTDASCHDL</sequence>
<gene>
    <name type="primary">Pou3f4</name>
    <name type="synonym">Brn-4</name>
    <name type="synonym">Brn4</name>
    <name type="synonym">Otf9</name>
</gene>